<evidence type="ECO:0000255" key="1">
    <source>
        <dbReference type="HAMAP-Rule" id="MF_00006"/>
    </source>
</evidence>
<reference key="1">
    <citation type="journal article" date="2000" name="Nature">
        <title>The genome sequence of the plant pathogen Xylella fastidiosa.</title>
        <authorList>
            <person name="Simpson A.J.G."/>
            <person name="Reinach F.C."/>
            <person name="Arruda P."/>
            <person name="Abreu F.A."/>
            <person name="Acencio M."/>
            <person name="Alvarenga R."/>
            <person name="Alves L.M.C."/>
            <person name="Araya J.E."/>
            <person name="Baia G.S."/>
            <person name="Baptista C.S."/>
            <person name="Barros M.H."/>
            <person name="Bonaccorsi E.D."/>
            <person name="Bordin S."/>
            <person name="Bove J.M."/>
            <person name="Briones M.R.S."/>
            <person name="Bueno M.R.P."/>
            <person name="Camargo A.A."/>
            <person name="Camargo L.E.A."/>
            <person name="Carraro D.M."/>
            <person name="Carrer H."/>
            <person name="Colauto N.B."/>
            <person name="Colombo C."/>
            <person name="Costa F.F."/>
            <person name="Costa M.C.R."/>
            <person name="Costa-Neto C.M."/>
            <person name="Coutinho L.L."/>
            <person name="Cristofani M."/>
            <person name="Dias-Neto E."/>
            <person name="Docena C."/>
            <person name="El-Dorry H."/>
            <person name="Facincani A.P."/>
            <person name="Ferreira A.J.S."/>
            <person name="Ferreira V.C.A."/>
            <person name="Ferro J.A."/>
            <person name="Fraga J.S."/>
            <person name="Franca S.C."/>
            <person name="Franco M.C."/>
            <person name="Frohme M."/>
            <person name="Furlan L.R."/>
            <person name="Garnier M."/>
            <person name="Goldman G.H."/>
            <person name="Goldman M.H.S."/>
            <person name="Gomes S.L."/>
            <person name="Gruber A."/>
            <person name="Ho P.L."/>
            <person name="Hoheisel J.D."/>
            <person name="Junqueira M.L."/>
            <person name="Kemper E.L."/>
            <person name="Kitajima J.P."/>
            <person name="Krieger J.E."/>
            <person name="Kuramae E.E."/>
            <person name="Laigret F."/>
            <person name="Lambais M.R."/>
            <person name="Leite L.C.C."/>
            <person name="Lemos E.G.M."/>
            <person name="Lemos M.V.F."/>
            <person name="Lopes S.A."/>
            <person name="Lopes C.R."/>
            <person name="Machado J.A."/>
            <person name="Machado M.A."/>
            <person name="Madeira A.M.B.N."/>
            <person name="Madeira H.M.F."/>
            <person name="Marino C.L."/>
            <person name="Marques M.V."/>
            <person name="Martins E.A.L."/>
            <person name="Martins E.M.F."/>
            <person name="Matsukuma A.Y."/>
            <person name="Menck C.F.M."/>
            <person name="Miracca E.C."/>
            <person name="Miyaki C.Y."/>
            <person name="Monteiro-Vitorello C.B."/>
            <person name="Moon D.H."/>
            <person name="Nagai M.A."/>
            <person name="Nascimento A.L.T.O."/>
            <person name="Netto L.E.S."/>
            <person name="Nhani A. Jr."/>
            <person name="Nobrega F.G."/>
            <person name="Nunes L.R."/>
            <person name="Oliveira M.A."/>
            <person name="de Oliveira M.C."/>
            <person name="de Oliveira R.C."/>
            <person name="Palmieri D.A."/>
            <person name="Paris A."/>
            <person name="Peixoto B.R."/>
            <person name="Pereira G.A.G."/>
            <person name="Pereira H.A. Jr."/>
            <person name="Pesquero J.B."/>
            <person name="Quaggio R.B."/>
            <person name="Roberto P.G."/>
            <person name="Rodrigues V."/>
            <person name="de Rosa A.J.M."/>
            <person name="de Rosa V.E. Jr."/>
            <person name="de Sa R.G."/>
            <person name="Santelli R.V."/>
            <person name="Sawasaki H.E."/>
            <person name="da Silva A.C.R."/>
            <person name="da Silva A.M."/>
            <person name="da Silva F.R."/>
            <person name="Silva W.A. Jr."/>
            <person name="da Silveira J.F."/>
            <person name="Silvestri M.L.Z."/>
            <person name="Siqueira W.J."/>
            <person name="de Souza A.A."/>
            <person name="de Souza A.P."/>
            <person name="Terenzi M.F."/>
            <person name="Truffi D."/>
            <person name="Tsai S.M."/>
            <person name="Tsuhako M.H."/>
            <person name="Vallada H."/>
            <person name="Van Sluys M.A."/>
            <person name="Verjovski-Almeida S."/>
            <person name="Vettore A.L."/>
            <person name="Zago M.A."/>
            <person name="Zatz M."/>
            <person name="Meidanis J."/>
            <person name="Setubal J.C."/>
        </authorList>
    </citation>
    <scope>NUCLEOTIDE SEQUENCE [LARGE SCALE GENOMIC DNA]</scope>
    <source>
        <strain>9a5c</strain>
    </source>
</reference>
<sequence length="445" mass="48928">MDTPPMPSLLWHKPGVAIDANIQTFLAADDVLLDREFFLYDITASTAHAQALQRIGLLTPDELDNILRELQHLTDEYRNGTFLLDTQYEDGHSAIESRLTERLGETGRKIHTGRSRNDQILVATRLWLKDRLTQLSTLNRDIAHHALQRAAAEQHLPMPGYTHLQRAVVSSAGMWWAGWAESFIDNAVRAADTHALIDCNPLGTAAGYGVNLPLDRPHTTAALGFARLQVNPICAQLSRGKFELAALEALGSATLDLRRIAWDLSLFTTSEFAFITLPPEYSTGSSIMPNKRNPDVIELMRATHASVAAARTEIEQLLSLPSGYHRDLQNSKGAIVRGFKRGLAALELLPALLSRLQWRPDTLRAAIDPGMYATDAAIEAAIAGIPFRDAYQMAAKTADTAAQGRTPETSLTARRSPGAAADLCLETLRARWHTLTQPTSDPDPR</sequence>
<comment type="catalytic activity">
    <reaction evidence="1">
        <text>2-(N(omega)-L-arginino)succinate = fumarate + L-arginine</text>
        <dbReference type="Rhea" id="RHEA:24020"/>
        <dbReference type="ChEBI" id="CHEBI:29806"/>
        <dbReference type="ChEBI" id="CHEBI:32682"/>
        <dbReference type="ChEBI" id="CHEBI:57472"/>
        <dbReference type="EC" id="4.3.2.1"/>
    </reaction>
</comment>
<comment type="pathway">
    <text evidence="1">Amino-acid biosynthesis; L-arginine biosynthesis; L-arginine from L-ornithine and carbamoyl phosphate: step 3/3.</text>
</comment>
<comment type="subcellular location">
    <subcellularLocation>
        <location evidence="1">Cytoplasm</location>
    </subcellularLocation>
</comment>
<comment type="similarity">
    <text evidence="1">Belongs to the lyase 1 family. Argininosuccinate lyase subfamily.</text>
</comment>
<feature type="chain" id="PRO_0000137853" description="Argininosuccinate lyase">
    <location>
        <begin position="1"/>
        <end position="445"/>
    </location>
</feature>
<organism>
    <name type="scientific">Xylella fastidiosa (strain 9a5c)</name>
    <dbReference type="NCBI Taxonomy" id="160492"/>
    <lineage>
        <taxon>Bacteria</taxon>
        <taxon>Pseudomonadati</taxon>
        <taxon>Pseudomonadota</taxon>
        <taxon>Gammaproteobacteria</taxon>
        <taxon>Lysobacterales</taxon>
        <taxon>Lysobacteraceae</taxon>
        <taxon>Xylella</taxon>
    </lineage>
</organism>
<name>ARLY_XYLFA</name>
<dbReference type="EC" id="4.3.2.1" evidence="1"/>
<dbReference type="EMBL" id="AE003849">
    <property type="protein sequence ID" value="AAF83813.1"/>
    <property type="molecule type" value="Genomic_DNA"/>
</dbReference>
<dbReference type="PIR" id="B82735">
    <property type="entry name" value="B82735"/>
</dbReference>
<dbReference type="SMR" id="Q9PEM5"/>
<dbReference type="STRING" id="160492.XF_1003"/>
<dbReference type="KEGG" id="xfa:XF_1003"/>
<dbReference type="eggNOG" id="COG0165">
    <property type="taxonomic scope" value="Bacteria"/>
</dbReference>
<dbReference type="HOGENOM" id="CLU_027272_2_0_6"/>
<dbReference type="UniPathway" id="UPA00068">
    <property type="reaction ID" value="UER00114"/>
</dbReference>
<dbReference type="Proteomes" id="UP000000812">
    <property type="component" value="Chromosome"/>
</dbReference>
<dbReference type="GO" id="GO:0005829">
    <property type="term" value="C:cytosol"/>
    <property type="evidence" value="ECO:0007669"/>
    <property type="project" value="TreeGrafter"/>
</dbReference>
<dbReference type="GO" id="GO:0004056">
    <property type="term" value="F:argininosuccinate lyase activity"/>
    <property type="evidence" value="ECO:0007669"/>
    <property type="project" value="UniProtKB-UniRule"/>
</dbReference>
<dbReference type="GO" id="GO:0042450">
    <property type="term" value="P:arginine biosynthetic process via ornithine"/>
    <property type="evidence" value="ECO:0007669"/>
    <property type="project" value="InterPro"/>
</dbReference>
<dbReference type="GO" id="GO:0006526">
    <property type="term" value="P:L-arginine biosynthetic process"/>
    <property type="evidence" value="ECO:0007669"/>
    <property type="project" value="UniProtKB-UniRule"/>
</dbReference>
<dbReference type="CDD" id="cd01359">
    <property type="entry name" value="Argininosuccinate_lyase"/>
    <property type="match status" value="1"/>
</dbReference>
<dbReference type="Gene3D" id="1.10.40.30">
    <property type="entry name" value="Fumarase/aspartase (C-terminal domain)"/>
    <property type="match status" value="1"/>
</dbReference>
<dbReference type="Gene3D" id="1.20.200.10">
    <property type="entry name" value="Fumarase/aspartase (Central domain)"/>
    <property type="match status" value="1"/>
</dbReference>
<dbReference type="Gene3D" id="1.10.275.10">
    <property type="entry name" value="Fumarase/aspartase (N-terminal domain)"/>
    <property type="match status" value="1"/>
</dbReference>
<dbReference type="HAMAP" id="MF_00006">
    <property type="entry name" value="Arg_succ_lyase"/>
    <property type="match status" value="1"/>
</dbReference>
<dbReference type="InterPro" id="IPR009049">
    <property type="entry name" value="Argininosuccinate_lyase"/>
</dbReference>
<dbReference type="InterPro" id="IPR024083">
    <property type="entry name" value="Fumarase/histidase_N"/>
</dbReference>
<dbReference type="InterPro" id="IPR020557">
    <property type="entry name" value="Fumarate_lyase_CS"/>
</dbReference>
<dbReference type="InterPro" id="IPR000362">
    <property type="entry name" value="Fumarate_lyase_fam"/>
</dbReference>
<dbReference type="InterPro" id="IPR022761">
    <property type="entry name" value="Fumarate_lyase_N"/>
</dbReference>
<dbReference type="InterPro" id="IPR008948">
    <property type="entry name" value="L-Aspartase-like"/>
</dbReference>
<dbReference type="NCBIfam" id="TIGR00838">
    <property type="entry name" value="argH"/>
    <property type="match status" value="1"/>
</dbReference>
<dbReference type="PANTHER" id="PTHR43814">
    <property type="entry name" value="ARGININOSUCCINATE LYASE"/>
    <property type="match status" value="1"/>
</dbReference>
<dbReference type="PANTHER" id="PTHR43814:SF1">
    <property type="entry name" value="ARGININOSUCCINATE LYASE"/>
    <property type="match status" value="1"/>
</dbReference>
<dbReference type="Pfam" id="PF00206">
    <property type="entry name" value="Lyase_1"/>
    <property type="match status" value="1"/>
</dbReference>
<dbReference type="PRINTS" id="PR00145">
    <property type="entry name" value="ARGSUCLYASE"/>
</dbReference>
<dbReference type="PRINTS" id="PR00149">
    <property type="entry name" value="FUMRATELYASE"/>
</dbReference>
<dbReference type="SUPFAM" id="SSF48557">
    <property type="entry name" value="L-aspartase-like"/>
    <property type="match status" value="1"/>
</dbReference>
<dbReference type="PROSITE" id="PS00163">
    <property type="entry name" value="FUMARATE_LYASES"/>
    <property type="match status" value="1"/>
</dbReference>
<gene>
    <name evidence="1" type="primary">argH</name>
    <name type="ordered locus">XF_1003</name>
</gene>
<protein>
    <recommendedName>
        <fullName evidence="1">Argininosuccinate lyase</fullName>
        <shortName evidence="1">ASAL</shortName>
        <ecNumber evidence="1">4.3.2.1</ecNumber>
    </recommendedName>
    <alternativeName>
        <fullName evidence="1">Arginosuccinase</fullName>
    </alternativeName>
</protein>
<proteinExistence type="inferred from homology"/>
<accession>Q9PEM5</accession>
<keyword id="KW-0028">Amino-acid biosynthesis</keyword>
<keyword id="KW-0055">Arginine biosynthesis</keyword>
<keyword id="KW-0963">Cytoplasm</keyword>
<keyword id="KW-0456">Lyase</keyword>